<dbReference type="EC" id="2.5.1.-"/>
<dbReference type="EMBL" id="S71770">
    <property type="protein sequence ID" value="AAB31139.1"/>
    <property type="molecule type" value="Genomic_DNA"/>
</dbReference>
<dbReference type="EMBL" id="AJ010302">
    <property type="protein sequence ID" value="CAB38740.1"/>
    <property type="molecule type" value="Genomic_DNA"/>
</dbReference>
<dbReference type="EMBL" id="AF195122">
    <property type="protein sequence ID" value="AAF24290.1"/>
    <property type="molecule type" value="Genomic_DNA"/>
</dbReference>
<dbReference type="EMBL" id="CP000143">
    <property type="protein sequence ID" value="ABA79443.1"/>
    <property type="molecule type" value="Genomic_DNA"/>
</dbReference>
<dbReference type="PIR" id="S49621">
    <property type="entry name" value="S49621"/>
</dbReference>
<dbReference type="PIR" id="T50746">
    <property type="entry name" value="T50746"/>
</dbReference>
<dbReference type="RefSeq" id="WP_011338116.1">
    <property type="nucleotide sequence ID" value="NC_007493.2"/>
</dbReference>
<dbReference type="RefSeq" id="YP_353344.1">
    <property type="nucleotide sequence ID" value="NC_007493.2"/>
</dbReference>
<dbReference type="SMR" id="P54905"/>
<dbReference type="STRING" id="272943.RSP_0270"/>
<dbReference type="EnsemblBacteria" id="ABA79443">
    <property type="protein sequence ID" value="ABA79443"/>
    <property type="gene ID" value="RSP_0270"/>
</dbReference>
<dbReference type="GeneID" id="3719279"/>
<dbReference type="KEGG" id="rsp:RSP_0270"/>
<dbReference type="PATRIC" id="fig|272943.9.peg.2213"/>
<dbReference type="eggNOG" id="COG1562">
    <property type="taxonomic scope" value="Bacteria"/>
</dbReference>
<dbReference type="OrthoDB" id="9807580at2"/>
<dbReference type="PhylomeDB" id="P54905"/>
<dbReference type="UniPathway" id="UPA00799"/>
<dbReference type="Proteomes" id="UP000002703">
    <property type="component" value="Chromosome 1"/>
</dbReference>
<dbReference type="GO" id="GO:0046905">
    <property type="term" value="F:15-cis-phytoene synthase activity"/>
    <property type="evidence" value="ECO:0000250"/>
    <property type="project" value="UniProtKB"/>
</dbReference>
<dbReference type="GO" id="GO:0004311">
    <property type="term" value="F:geranylgeranyl diphosphate synthase activity"/>
    <property type="evidence" value="ECO:0007669"/>
    <property type="project" value="InterPro"/>
</dbReference>
<dbReference type="GO" id="GO:0046872">
    <property type="term" value="F:metal ion binding"/>
    <property type="evidence" value="ECO:0007669"/>
    <property type="project" value="UniProtKB-KW"/>
</dbReference>
<dbReference type="GO" id="GO:0051996">
    <property type="term" value="F:squalene synthase [NAD(P)H] activity"/>
    <property type="evidence" value="ECO:0007669"/>
    <property type="project" value="InterPro"/>
</dbReference>
<dbReference type="GO" id="GO:0016117">
    <property type="term" value="P:carotenoid biosynthetic process"/>
    <property type="evidence" value="ECO:0000250"/>
    <property type="project" value="UniProtKB"/>
</dbReference>
<dbReference type="CDD" id="cd00683">
    <property type="entry name" value="Trans_IPPS_HH"/>
    <property type="match status" value="1"/>
</dbReference>
<dbReference type="FunFam" id="1.10.600.10:FF:000020">
    <property type="entry name" value="Phytoene synthase"/>
    <property type="match status" value="1"/>
</dbReference>
<dbReference type="Gene3D" id="1.10.600.10">
    <property type="entry name" value="Farnesyl Diphosphate Synthase"/>
    <property type="match status" value="1"/>
</dbReference>
<dbReference type="InterPro" id="IPR008949">
    <property type="entry name" value="Isoprenoid_synthase_dom_sf"/>
</dbReference>
<dbReference type="InterPro" id="IPR002060">
    <property type="entry name" value="Squ/phyt_synthse"/>
</dbReference>
<dbReference type="InterPro" id="IPR019845">
    <property type="entry name" value="Squalene/phytoene_synthase_CS"/>
</dbReference>
<dbReference type="InterPro" id="IPR044843">
    <property type="entry name" value="Trans_IPPS_bact-type"/>
</dbReference>
<dbReference type="InterPro" id="IPR033904">
    <property type="entry name" value="Trans_IPPS_HH"/>
</dbReference>
<dbReference type="NCBIfam" id="NF045921">
    <property type="entry name" value="PhytnSynCrtBRhod"/>
    <property type="match status" value="1"/>
</dbReference>
<dbReference type="PANTHER" id="PTHR31480">
    <property type="entry name" value="BIFUNCTIONAL LYCOPENE CYCLASE/PHYTOENE SYNTHASE"/>
    <property type="match status" value="1"/>
</dbReference>
<dbReference type="Pfam" id="PF00494">
    <property type="entry name" value="SQS_PSY"/>
    <property type="match status" value="1"/>
</dbReference>
<dbReference type="SFLD" id="SFLDG01212">
    <property type="entry name" value="Phytoene_synthase_like"/>
    <property type="match status" value="1"/>
</dbReference>
<dbReference type="SFLD" id="SFLDG01018">
    <property type="entry name" value="Squalene/Phytoene_Synthase_Lik"/>
    <property type="match status" value="1"/>
</dbReference>
<dbReference type="SUPFAM" id="SSF48576">
    <property type="entry name" value="Terpenoid synthases"/>
    <property type="match status" value="1"/>
</dbReference>
<dbReference type="PROSITE" id="PS01044">
    <property type="entry name" value="SQUALEN_PHYTOEN_SYN_1"/>
    <property type="match status" value="1"/>
</dbReference>
<dbReference type="PROSITE" id="PS01045">
    <property type="entry name" value="SQUALEN_PHYTOEN_SYN_2"/>
    <property type="match status" value="1"/>
</dbReference>
<name>CRTB_CERS4</name>
<feature type="chain" id="PRO_0000067434" description="Phytoene synthase">
    <location>
        <begin position="1"/>
        <end position="355"/>
    </location>
</feature>
<feature type="sequence conflict" description="In Ref. 3; AAF24290." evidence="2" ref="3">
    <original>L</original>
    <variation>Q</variation>
    <location>
        <position position="219"/>
    </location>
</feature>
<feature type="sequence conflict" description="In Ref. 1 and 2." evidence="2" ref="1 2">
    <original>A</original>
    <variation>S</variation>
    <location>
        <position position="286"/>
    </location>
</feature>
<feature type="sequence conflict" description="In Ref. 3; AAF24290." evidence="2" ref="3">
    <original>G</original>
    <variation>R</variation>
    <location>
        <position position="324"/>
    </location>
</feature>
<gene>
    <name type="primary">crtB</name>
    <name type="ordered locus">RHOS4_18750</name>
    <name type="ORF">RSP_0270</name>
</gene>
<proteinExistence type="inferred from homology"/>
<keyword id="KW-0125">Carotenoid biosynthesis</keyword>
<keyword id="KW-0460">Magnesium</keyword>
<keyword id="KW-0464">Manganese</keyword>
<keyword id="KW-0479">Metal-binding</keyword>
<keyword id="KW-1185">Reference proteome</keyword>
<keyword id="KW-0808">Transferase</keyword>
<accession>P54905</accession>
<accession>Q3J191</accession>
<accession>Q9RFC9</accession>
<evidence type="ECO:0000250" key="1"/>
<evidence type="ECO:0000305" key="2"/>
<reference key="1">
    <citation type="journal article" date="1994" name="J. Bacteriol.">
        <title>Early steps in carotenoid biosynthesis: sequences and transcriptional analysis of the crtI and crtB genes of Rhodobacter sphaeroides and overexpression and reactivation of crtI in Escherichia coli and R. sphaeroides.</title>
        <authorList>
            <person name="Lang H.P."/>
            <person name="Cogdell R.J."/>
            <person name="Gardiner A.T."/>
            <person name="Hunter C.N."/>
        </authorList>
    </citation>
    <scope>NUCLEOTIDE SEQUENCE [GENOMIC DNA]</scope>
</reference>
<reference key="2">
    <citation type="journal article" date="1995" name="J. Bacteriol.">
        <title>Complete DNA sequence, specific Tn5 insertion map, and gene assignment of the carotenoid biosynthesis pathway of Rhodobacter sphaeroides.</title>
        <authorList>
            <person name="Lang H.P."/>
            <person name="Cogdell R.J."/>
            <person name="Takaichi S."/>
            <person name="Hunter C.N."/>
        </authorList>
    </citation>
    <scope>NUCLEOTIDE SEQUENCE [GENOMIC DNA]</scope>
</reference>
<reference key="3">
    <citation type="journal article" date="2000" name="Nucleic Acids Res.">
        <title>DNA sequence analysis of the photosynthesis region of Rhodobacter sphaeroides 2.4.1.</title>
        <authorList>
            <person name="Choudhary M."/>
            <person name="Kaplan S."/>
        </authorList>
    </citation>
    <scope>NUCLEOTIDE SEQUENCE [GENOMIC DNA]</scope>
</reference>
<reference key="4">
    <citation type="submission" date="2005-09" db="EMBL/GenBank/DDBJ databases">
        <title>Complete sequence of chromosome 1 of Rhodobacter sphaeroides 2.4.1.</title>
        <authorList>
            <person name="Copeland A."/>
            <person name="Lucas S."/>
            <person name="Lapidus A."/>
            <person name="Barry K."/>
            <person name="Detter J.C."/>
            <person name="Glavina T."/>
            <person name="Hammon N."/>
            <person name="Israni S."/>
            <person name="Pitluck S."/>
            <person name="Richardson P."/>
            <person name="Mackenzie C."/>
            <person name="Choudhary M."/>
            <person name="Larimer F."/>
            <person name="Hauser L.J."/>
            <person name="Land M."/>
            <person name="Donohue T.J."/>
            <person name="Kaplan S."/>
        </authorList>
    </citation>
    <scope>NUCLEOTIDE SEQUENCE [LARGE SCALE GENOMIC DNA]</scope>
    <source>
        <strain>ATCC 17023 / DSM 158 / JCM 6121 / CCUG 31486 / LMG 2827 / NBRC 12203 / NCIMB 8253 / ATH 2.4.1.</strain>
    </source>
</reference>
<comment type="function">
    <text evidence="1">Involved in the biosynthesis of carotenoids. Catalyzes the condensation of two molecules of geranylgeranyl diphosphate (GGPP) to give prephytoene diphosphate (PPPP) and the subsequent rearrangement of the cyclopropylcarbinyl intermediate to yield phytoene (By similarity).</text>
</comment>
<comment type="cofactor">
    <cofactor evidence="1">
        <name>ATP</name>
        <dbReference type="ChEBI" id="CHEBI:30616"/>
    </cofactor>
    <text evidence="1">ATP is required for the transferase activity but it does not seem to be hydrolyzed during the reaction.</text>
</comment>
<comment type="cofactor">
    <cofactor evidence="1">
        <name>Mn(2+)</name>
        <dbReference type="ChEBI" id="CHEBI:29035"/>
    </cofactor>
    <cofactor evidence="1">
        <name>Mg(2+)</name>
        <dbReference type="ChEBI" id="CHEBI:18420"/>
    </cofactor>
</comment>
<comment type="pathway">
    <text>Carotenoid biosynthesis; phytoene biosynthesis.</text>
</comment>
<comment type="similarity">
    <text evidence="2">Belongs to the phytoene/squalene synthase family.</text>
</comment>
<sequence>MIASADLDACREMIRTGSYSFHAASRLLPERVRAPSLALYAFCRVADDAVDEAVNDGQREEDAEVKRRAVLSLRDRLDLVYGGRPRNAPADRAFAAVVEEFEMPRALPEALLEGLAWDAVGRSYDSFSGVLDYSARVAAAVGAMMCVLMRVRDPDVLARACDLGLAMQLTNIARDVGTDARSGRIYLPRDWMEEEGLPVEEFLARPVVDDRIRAVTHRLLRAADRLYLRSEAGVCGLPLACRPGIYAARHIYAGIGDEIARNGYDSVTRRAFTTRRQKLVWLGLSATRAALSPFGPGCATLHAAPEPEVAFLVNAAARARPQRGRSEALISVLAQLEAQDRQISRQRLGNRANPI</sequence>
<organism>
    <name type="scientific">Cereibacter sphaeroides (strain ATCC 17023 / DSM 158 / JCM 6121 / CCUG 31486 / LMG 2827 / NBRC 12203 / NCIMB 8253 / ATH 2.4.1.)</name>
    <name type="common">Rhodobacter sphaeroides</name>
    <dbReference type="NCBI Taxonomy" id="272943"/>
    <lineage>
        <taxon>Bacteria</taxon>
        <taxon>Pseudomonadati</taxon>
        <taxon>Pseudomonadota</taxon>
        <taxon>Alphaproteobacteria</taxon>
        <taxon>Rhodobacterales</taxon>
        <taxon>Paracoccaceae</taxon>
        <taxon>Cereibacter</taxon>
    </lineage>
</organism>
<protein>
    <recommendedName>
        <fullName>Phytoene synthase</fullName>
        <shortName>PSase</shortName>
        <ecNumber>2.5.1.-</ecNumber>
    </recommendedName>
</protein>